<keyword id="KW-0240">DNA-directed RNA polymerase</keyword>
<keyword id="KW-0548">Nucleotidyltransferase</keyword>
<keyword id="KW-1185">Reference proteome</keyword>
<keyword id="KW-0804">Transcription</keyword>
<keyword id="KW-0808">Transferase</keyword>
<organism>
    <name type="scientific">Mycoplasmoides gallisepticum (strain R(low / passage 15 / clone 2))</name>
    <name type="common">Mycoplasma gallisepticum</name>
    <dbReference type="NCBI Taxonomy" id="710127"/>
    <lineage>
        <taxon>Bacteria</taxon>
        <taxon>Bacillati</taxon>
        <taxon>Mycoplasmatota</taxon>
        <taxon>Mycoplasmoidales</taxon>
        <taxon>Mycoplasmoidaceae</taxon>
        <taxon>Mycoplasmoides</taxon>
    </lineage>
</organism>
<evidence type="ECO:0000255" key="1">
    <source>
        <dbReference type="HAMAP-Rule" id="MF_01321"/>
    </source>
</evidence>
<evidence type="ECO:0000256" key="2">
    <source>
        <dbReference type="SAM" id="MobiDB-lite"/>
    </source>
</evidence>
<evidence type="ECO:0000305" key="3"/>
<proteinExistence type="inferred from homology"/>
<protein>
    <recommendedName>
        <fullName evidence="1">DNA-directed RNA polymerase subunit beta</fullName>
        <shortName evidence="1">RNAP subunit beta</shortName>
        <ecNumber evidence="1">2.7.7.6</ecNumber>
    </recommendedName>
    <alternativeName>
        <fullName evidence="1">RNA polymerase subunit beta</fullName>
    </alternativeName>
    <alternativeName>
        <fullName evidence="1">Transcriptase subunit beta</fullName>
    </alternativeName>
</protein>
<comment type="function">
    <text evidence="1">DNA-dependent RNA polymerase catalyzes the transcription of DNA into RNA using the four ribonucleoside triphosphates as substrates.</text>
</comment>
<comment type="catalytic activity">
    <reaction evidence="1">
        <text>RNA(n) + a ribonucleoside 5'-triphosphate = RNA(n+1) + diphosphate</text>
        <dbReference type="Rhea" id="RHEA:21248"/>
        <dbReference type="Rhea" id="RHEA-COMP:14527"/>
        <dbReference type="Rhea" id="RHEA-COMP:17342"/>
        <dbReference type="ChEBI" id="CHEBI:33019"/>
        <dbReference type="ChEBI" id="CHEBI:61557"/>
        <dbReference type="ChEBI" id="CHEBI:140395"/>
        <dbReference type="EC" id="2.7.7.6"/>
    </reaction>
</comment>
<comment type="subunit">
    <text evidence="1">The RNAP catalytic core consists of 2 alpha, 1 beta, 1 beta' and 1 omega subunit. When a sigma factor is associated with the core the holoenzyme is formed, which can initiate transcription.</text>
</comment>
<comment type="similarity">
    <text evidence="1">Belongs to the RNA polymerase beta chain family.</text>
</comment>
<gene>
    <name evidence="1" type="primary">rpoB</name>
    <name type="ordered locus">MYCGA2130</name>
    <name type="ORF">MGA_1000</name>
</gene>
<dbReference type="EC" id="2.7.7.6" evidence="1"/>
<dbReference type="EMBL" id="L38402">
    <property type="protein sequence ID" value="AAB40951.1"/>
    <property type="molecule type" value="Genomic_DNA"/>
</dbReference>
<dbReference type="EMBL" id="AE015450">
    <property type="protein sequence ID" value="AAP56563.2"/>
    <property type="molecule type" value="Genomic_DNA"/>
</dbReference>
<dbReference type="RefSeq" id="WP_011113454.1">
    <property type="nucleotide sequence ID" value="NC_004829.2"/>
</dbReference>
<dbReference type="SMR" id="P47715"/>
<dbReference type="KEGG" id="mga:MGA_1000"/>
<dbReference type="HOGENOM" id="CLU_000524_4_1_14"/>
<dbReference type="OrthoDB" id="9803954at2"/>
<dbReference type="Proteomes" id="UP000001418">
    <property type="component" value="Chromosome"/>
</dbReference>
<dbReference type="GO" id="GO:0000428">
    <property type="term" value="C:DNA-directed RNA polymerase complex"/>
    <property type="evidence" value="ECO:0007669"/>
    <property type="project" value="UniProtKB-KW"/>
</dbReference>
<dbReference type="GO" id="GO:0003677">
    <property type="term" value="F:DNA binding"/>
    <property type="evidence" value="ECO:0007669"/>
    <property type="project" value="UniProtKB-UniRule"/>
</dbReference>
<dbReference type="GO" id="GO:0003899">
    <property type="term" value="F:DNA-directed RNA polymerase activity"/>
    <property type="evidence" value="ECO:0007669"/>
    <property type="project" value="UniProtKB-UniRule"/>
</dbReference>
<dbReference type="GO" id="GO:0032549">
    <property type="term" value="F:ribonucleoside binding"/>
    <property type="evidence" value="ECO:0007669"/>
    <property type="project" value="InterPro"/>
</dbReference>
<dbReference type="GO" id="GO:0006351">
    <property type="term" value="P:DNA-templated transcription"/>
    <property type="evidence" value="ECO:0007669"/>
    <property type="project" value="UniProtKB-UniRule"/>
</dbReference>
<dbReference type="CDD" id="cd00653">
    <property type="entry name" value="RNA_pol_B_RPB2"/>
    <property type="match status" value="1"/>
</dbReference>
<dbReference type="Gene3D" id="2.40.50.100">
    <property type="match status" value="1"/>
</dbReference>
<dbReference type="Gene3D" id="2.40.50.150">
    <property type="match status" value="1"/>
</dbReference>
<dbReference type="Gene3D" id="3.90.1100.10">
    <property type="match status" value="3"/>
</dbReference>
<dbReference type="Gene3D" id="2.30.150.10">
    <property type="entry name" value="DNA-directed RNA polymerase, beta subunit, external 1 domain"/>
    <property type="match status" value="1"/>
</dbReference>
<dbReference type="Gene3D" id="2.40.270.10">
    <property type="entry name" value="DNA-directed RNA polymerase, subunit 2, domain 6"/>
    <property type="match status" value="1"/>
</dbReference>
<dbReference type="Gene3D" id="3.90.1800.10">
    <property type="entry name" value="RNA polymerase alpha subunit dimerisation domain"/>
    <property type="match status" value="1"/>
</dbReference>
<dbReference type="Gene3D" id="3.90.1110.10">
    <property type="entry name" value="RNA polymerase Rpb2, domain 2"/>
    <property type="match status" value="1"/>
</dbReference>
<dbReference type="HAMAP" id="MF_01321">
    <property type="entry name" value="RNApol_bact_RpoB"/>
    <property type="match status" value="1"/>
</dbReference>
<dbReference type="InterPro" id="IPR042107">
    <property type="entry name" value="DNA-dir_RNA_pol_bsu_ext_1_sf"/>
</dbReference>
<dbReference type="InterPro" id="IPR019462">
    <property type="entry name" value="DNA-dir_RNA_pol_bsu_external_1"/>
</dbReference>
<dbReference type="InterPro" id="IPR015712">
    <property type="entry name" value="DNA-dir_RNA_pol_su2"/>
</dbReference>
<dbReference type="InterPro" id="IPR007120">
    <property type="entry name" value="DNA-dir_RNAP_su2_dom"/>
</dbReference>
<dbReference type="InterPro" id="IPR037033">
    <property type="entry name" value="DNA-dir_RNAP_su2_hyb_sf"/>
</dbReference>
<dbReference type="InterPro" id="IPR010243">
    <property type="entry name" value="RNA_pol_bsu_bac"/>
</dbReference>
<dbReference type="InterPro" id="IPR007121">
    <property type="entry name" value="RNA_pol_bsu_CS"/>
</dbReference>
<dbReference type="InterPro" id="IPR007644">
    <property type="entry name" value="RNA_pol_bsu_protrusion"/>
</dbReference>
<dbReference type="InterPro" id="IPR007642">
    <property type="entry name" value="RNA_pol_Rpb2_2"/>
</dbReference>
<dbReference type="InterPro" id="IPR037034">
    <property type="entry name" value="RNA_pol_Rpb2_2_sf"/>
</dbReference>
<dbReference type="InterPro" id="IPR007645">
    <property type="entry name" value="RNA_pol_Rpb2_3"/>
</dbReference>
<dbReference type="InterPro" id="IPR007641">
    <property type="entry name" value="RNA_pol_Rpb2_7"/>
</dbReference>
<dbReference type="InterPro" id="IPR014724">
    <property type="entry name" value="RNA_pol_RPB2_OB-fold"/>
</dbReference>
<dbReference type="NCBIfam" id="NF001616">
    <property type="entry name" value="PRK00405.1"/>
    <property type="match status" value="1"/>
</dbReference>
<dbReference type="NCBIfam" id="TIGR02013">
    <property type="entry name" value="rpoB"/>
    <property type="match status" value="1"/>
</dbReference>
<dbReference type="PANTHER" id="PTHR20856">
    <property type="entry name" value="DNA-DIRECTED RNA POLYMERASE I SUBUNIT 2"/>
    <property type="match status" value="1"/>
</dbReference>
<dbReference type="Pfam" id="PF04563">
    <property type="entry name" value="RNA_pol_Rpb2_1"/>
    <property type="match status" value="1"/>
</dbReference>
<dbReference type="Pfam" id="PF04561">
    <property type="entry name" value="RNA_pol_Rpb2_2"/>
    <property type="match status" value="1"/>
</dbReference>
<dbReference type="Pfam" id="PF04565">
    <property type="entry name" value="RNA_pol_Rpb2_3"/>
    <property type="match status" value="1"/>
</dbReference>
<dbReference type="Pfam" id="PF10385">
    <property type="entry name" value="RNA_pol_Rpb2_45"/>
    <property type="match status" value="1"/>
</dbReference>
<dbReference type="Pfam" id="PF00562">
    <property type="entry name" value="RNA_pol_Rpb2_6"/>
    <property type="match status" value="1"/>
</dbReference>
<dbReference type="Pfam" id="PF04560">
    <property type="entry name" value="RNA_pol_Rpb2_7"/>
    <property type="match status" value="1"/>
</dbReference>
<dbReference type="SUPFAM" id="SSF64484">
    <property type="entry name" value="beta and beta-prime subunits of DNA dependent RNA-polymerase"/>
    <property type="match status" value="1"/>
</dbReference>
<dbReference type="PROSITE" id="PS01166">
    <property type="entry name" value="RNA_POL_BETA"/>
    <property type="match status" value="1"/>
</dbReference>
<name>RPOB_MYCGA</name>
<reference key="1">
    <citation type="journal article" date="1996" name="Mol. Biol. (Mosk.)">
        <title>Determination of the nucleotide sequence of the part of the Mycoplasma gallisepticum genome, containing the rpoB gene, during the use of the Bal-pTM method for obtaining sequential deletions of the sequenced fragment.</title>
        <authorList>
            <person name="Skamrov A.V."/>
            <person name="Rozovskaia T.A."/>
            <person name="Gol'dman M.A."/>
            <person name="Feotistova E.S."/>
            <person name="Bibilashvili R.S."/>
        </authorList>
    </citation>
    <scope>NUCLEOTIDE SEQUENCE [GENOMIC DNA]</scope>
    <source>
        <strain>A5969Var.B</strain>
    </source>
</reference>
<reference key="2">
    <citation type="journal article" date="2003" name="Microbiology">
        <title>The complete genome sequence of the avian pathogen Mycoplasma gallisepticum strain R(low).</title>
        <authorList>
            <person name="Papazisi L."/>
            <person name="Gorton T.S."/>
            <person name="Kutish G."/>
            <person name="Markham P.F."/>
            <person name="Browning G.F."/>
            <person name="Nguyen D.K."/>
            <person name="Swartzell S."/>
            <person name="Madan A."/>
            <person name="Mahairas G."/>
            <person name="Geary S.J."/>
        </authorList>
    </citation>
    <scope>NUCLEOTIDE SEQUENCE [LARGE SCALE GENOMIC DNA]</scope>
    <source>
        <strain>R(low / passage 15 / clone 2)</strain>
    </source>
</reference>
<sequence>MKKNSAFHNTQYSPKVVRRDYSKVHNKYNPLNLPGIQVNAYKQFLEKELEEIIGSYFPIKSPNGKYSVEFHGMKILDPQITKEEASAESKTYDASLYVNLSLVNHQTGTVKKISKKSAKSKAEGIYFADIPLMTENGAFIVNGIEKFVVAQIVRSPGAYILNKSQVKLSNSRKRNQEGYICEVFPSKGTLMLFYIAENKDFVQAVVRDVGGESAKVFSITTLLKAFGLSEIKIKEIFNNNDYILRSLESEFYNEKQILNEADIAQLIRDIESDRISKVKSLPIDQKWKNLVLDWYKLNQEKQELLNSSNPNPTKIESLNTHIGVVLRKLICEKAAKHVIQELSISTRSLDNVSQKEEISYQSILLQHFFQKKRYDLSSAGRHKFVRKLRVSERLYQRTIAQDIKDLDGNVVIKQGTLMLKEQLDLFKRLSKEKRLDIIKQIDFINPELNTQFTDVNTYEEVQIYVNNDLRNETTQIIGIDGSNESIETLTLADLISIVSYIVNLPFNIGLYDDIDHLGNKRLKLINELLKSKVQTGMMRIEKYIKDKLQTADGNNKLADQDAENDPDSDLGTKSSNDLTVKSVINPKPFQIVIKDFFNTHQLTQFLDQQNPLSELTNKRRISAMGPGGISREDPNLDIRDVHYSHYGRICPIETPEGMNIGLIMSLAFYATIDKNGFLMTPYLKVENGKITDKVEHLTALREDEYIIAEASSYMDVAKDGTINNEKIIARYRSSQDLYDPKQVDYIDVSPKQVVSVAASLIPFLENDDSSRALMGANMQRQATPLLKPYSPLVGTGVEYKIAQDSGMLVTAKNPGTVTYVDASKITVKGEDNKSTDYNLLKFVKSNKNTCYNQSPIVAVGDKIETNQALADGPSMKNGELALGQNVLVGFTTWSGYNYEDAVIISDRLFKDDVYSSIHIDEYTIECLRTKNGDEEITRDIPNISESAKRYLDEEGVIMVGAEVKEGDILVGKTSPKGQVELTPEEKLIQAILGDKVKQVRESSLKVPNGGDGIVAGIKRFSIANGDELEDDVLELVKVYVVQKRKIQIGDKVAGRHGNKGIISKIVAQEDMPHLEDGTPLDILLNPLGVPSRMNIGQIFELHLGYAARELAKAKLIEACFDKKLADQLDTVFGLEKSKTQSLIKNLVEHMKSIGVTSLAQTKNRVRTIDIDIVLKQLGLTYDDLAFKIATPVFEGVNMEDLKAIMSEAGIDPDKTEGKFKLIDGRTGEPFEKPISVGIMYMLKLDHMVDDKIHARAVGPYSKITQQPLGGKSQNGGQRFGEMEVWALQAYGAAHNLREILTIKSDDVRGRNMTYNAIVKGLSIPEPGVPESFKLLTKELQGLGMTLNVLYDDDSIENINNISVVDESLEPKIHDAEFDTFTLDDYNDDNF</sequence>
<feature type="chain" id="PRO_0000047918" description="DNA-directed RNA polymerase subunit beta">
    <location>
        <begin position="1"/>
        <end position="1390"/>
    </location>
</feature>
<feature type="region of interest" description="Disordered" evidence="2">
    <location>
        <begin position="556"/>
        <end position="576"/>
    </location>
</feature>
<feature type="sequence conflict" description="In Ref. 1; AAB40951." evidence="3" ref="1">
    <original>S</original>
    <variation>A</variation>
    <location>
        <position position="353"/>
    </location>
</feature>
<feature type="sequence conflict" description="In Ref. 1; AAB40951." evidence="3" ref="1">
    <original>D</original>
    <variation>H</variation>
    <location>
        <position position="454"/>
    </location>
</feature>
<feature type="sequence conflict" description="In Ref. 1; AAB40951." evidence="3" ref="1">
    <original>S</original>
    <variation>G</variation>
    <location>
        <position position="575"/>
    </location>
</feature>
<feature type="sequence conflict" description="In Ref. 1; AAB40951." evidence="3" ref="1">
    <original>R</original>
    <variation>T</variation>
    <location>
        <position position="701"/>
    </location>
</feature>
<feature type="sequence conflict" description="In Ref. 1; AAB40951." evidence="3" ref="1">
    <original>D</original>
    <variation>V</variation>
    <location>
        <position position="747"/>
    </location>
</feature>
<feature type="sequence conflict" description="In Ref. 1; AAB40951." evidence="3" ref="1">
    <original>T</original>
    <variation>I</variation>
    <location>
        <position position="937"/>
    </location>
</feature>
<feature type="sequence conflict" description="In Ref. 1; AAB40951." evidence="3" ref="1">
    <original>A</original>
    <variation>V</variation>
    <location>
        <position position="990"/>
    </location>
</feature>
<accession>P47715</accession>